<organism>
    <name type="scientific">Caulobacter sp. (strain K31)</name>
    <dbReference type="NCBI Taxonomy" id="366602"/>
    <lineage>
        <taxon>Bacteria</taxon>
        <taxon>Pseudomonadati</taxon>
        <taxon>Pseudomonadota</taxon>
        <taxon>Alphaproteobacteria</taxon>
        <taxon>Caulobacterales</taxon>
        <taxon>Caulobacteraceae</taxon>
        <taxon>Caulobacter</taxon>
    </lineage>
</organism>
<keyword id="KW-0488">Methylation</keyword>
<keyword id="KW-0687">Ribonucleoprotein</keyword>
<keyword id="KW-0689">Ribosomal protein</keyword>
<keyword id="KW-0694">RNA-binding</keyword>
<keyword id="KW-0699">rRNA-binding</keyword>
<gene>
    <name evidence="1" type="primary">rplK</name>
    <name type="ordered locus">Caul_4435</name>
</gene>
<protein>
    <recommendedName>
        <fullName evidence="1">Large ribosomal subunit protein uL11</fullName>
    </recommendedName>
    <alternativeName>
        <fullName evidence="2">50S ribosomal protein L11</fullName>
    </alternativeName>
</protein>
<feature type="chain" id="PRO_1000083371" description="Large ribosomal subunit protein uL11">
    <location>
        <begin position="1"/>
        <end position="143"/>
    </location>
</feature>
<reference key="1">
    <citation type="submission" date="2008-01" db="EMBL/GenBank/DDBJ databases">
        <title>Complete sequence of chromosome of Caulobacter sp. K31.</title>
        <authorList>
            <consortium name="US DOE Joint Genome Institute"/>
            <person name="Copeland A."/>
            <person name="Lucas S."/>
            <person name="Lapidus A."/>
            <person name="Barry K."/>
            <person name="Glavina del Rio T."/>
            <person name="Dalin E."/>
            <person name="Tice H."/>
            <person name="Pitluck S."/>
            <person name="Bruce D."/>
            <person name="Goodwin L."/>
            <person name="Thompson L.S."/>
            <person name="Brettin T."/>
            <person name="Detter J.C."/>
            <person name="Han C."/>
            <person name="Schmutz J."/>
            <person name="Larimer F."/>
            <person name="Land M."/>
            <person name="Hauser L."/>
            <person name="Kyrpides N."/>
            <person name="Kim E."/>
            <person name="Stephens C."/>
            <person name="Richardson P."/>
        </authorList>
    </citation>
    <scope>NUCLEOTIDE SEQUENCE [LARGE SCALE GENOMIC DNA]</scope>
    <source>
        <strain>K31</strain>
    </source>
</reference>
<comment type="function">
    <text evidence="1">Forms part of the ribosomal stalk which helps the ribosome interact with GTP-bound translation factors.</text>
</comment>
<comment type="subunit">
    <text evidence="1">Part of the ribosomal stalk of the 50S ribosomal subunit. Interacts with L10 and the large rRNA to form the base of the stalk. L10 forms an elongated spine to which L12 dimers bind in a sequential fashion forming a multimeric L10(L12)X complex.</text>
</comment>
<comment type="PTM">
    <text evidence="1">One or more lysine residues are methylated.</text>
</comment>
<comment type="similarity">
    <text evidence="1">Belongs to the universal ribosomal protein uL11 family.</text>
</comment>
<accession>B0T065</accession>
<dbReference type="EMBL" id="CP000927">
    <property type="protein sequence ID" value="ABZ73555.1"/>
    <property type="molecule type" value="Genomic_DNA"/>
</dbReference>
<dbReference type="SMR" id="B0T065"/>
<dbReference type="STRING" id="366602.Caul_4435"/>
<dbReference type="KEGG" id="cak:Caul_4435"/>
<dbReference type="eggNOG" id="COG0080">
    <property type="taxonomic scope" value="Bacteria"/>
</dbReference>
<dbReference type="HOGENOM" id="CLU_074237_2_0_5"/>
<dbReference type="OrthoDB" id="9802408at2"/>
<dbReference type="GO" id="GO:0022625">
    <property type="term" value="C:cytosolic large ribosomal subunit"/>
    <property type="evidence" value="ECO:0007669"/>
    <property type="project" value="TreeGrafter"/>
</dbReference>
<dbReference type="GO" id="GO:0070180">
    <property type="term" value="F:large ribosomal subunit rRNA binding"/>
    <property type="evidence" value="ECO:0007669"/>
    <property type="project" value="UniProtKB-UniRule"/>
</dbReference>
<dbReference type="GO" id="GO:0003735">
    <property type="term" value="F:structural constituent of ribosome"/>
    <property type="evidence" value="ECO:0007669"/>
    <property type="project" value="InterPro"/>
</dbReference>
<dbReference type="GO" id="GO:0006412">
    <property type="term" value="P:translation"/>
    <property type="evidence" value="ECO:0007669"/>
    <property type="project" value="UniProtKB-UniRule"/>
</dbReference>
<dbReference type="CDD" id="cd00349">
    <property type="entry name" value="Ribosomal_L11"/>
    <property type="match status" value="1"/>
</dbReference>
<dbReference type="FunFam" id="3.30.1550.10:FF:000001">
    <property type="entry name" value="50S ribosomal protein L11"/>
    <property type="match status" value="1"/>
</dbReference>
<dbReference type="Gene3D" id="1.10.10.250">
    <property type="entry name" value="Ribosomal protein L11, C-terminal domain"/>
    <property type="match status" value="1"/>
</dbReference>
<dbReference type="Gene3D" id="3.30.1550.10">
    <property type="entry name" value="Ribosomal protein L11/L12, N-terminal domain"/>
    <property type="match status" value="1"/>
</dbReference>
<dbReference type="HAMAP" id="MF_00736">
    <property type="entry name" value="Ribosomal_uL11"/>
    <property type="match status" value="1"/>
</dbReference>
<dbReference type="InterPro" id="IPR000911">
    <property type="entry name" value="Ribosomal_uL11"/>
</dbReference>
<dbReference type="InterPro" id="IPR006519">
    <property type="entry name" value="Ribosomal_uL11_bac-typ"/>
</dbReference>
<dbReference type="InterPro" id="IPR020783">
    <property type="entry name" value="Ribosomal_uL11_C"/>
</dbReference>
<dbReference type="InterPro" id="IPR036769">
    <property type="entry name" value="Ribosomal_uL11_C_sf"/>
</dbReference>
<dbReference type="InterPro" id="IPR020784">
    <property type="entry name" value="Ribosomal_uL11_N"/>
</dbReference>
<dbReference type="InterPro" id="IPR036796">
    <property type="entry name" value="Ribosomal_uL11_N_sf"/>
</dbReference>
<dbReference type="NCBIfam" id="TIGR01632">
    <property type="entry name" value="L11_bact"/>
    <property type="match status" value="1"/>
</dbReference>
<dbReference type="PANTHER" id="PTHR11661">
    <property type="entry name" value="60S RIBOSOMAL PROTEIN L12"/>
    <property type="match status" value="1"/>
</dbReference>
<dbReference type="PANTHER" id="PTHR11661:SF1">
    <property type="entry name" value="LARGE RIBOSOMAL SUBUNIT PROTEIN UL11M"/>
    <property type="match status" value="1"/>
</dbReference>
<dbReference type="Pfam" id="PF00298">
    <property type="entry name" value="Ribosomal_L11"/>
    <property type="match status" value="1"/>
</dbReference>
<dbReference type="Pfam" id="PF03946">
    <property type="entry name" value="Ribosomal_L11_N"/>
    <property type="match status" value="1"/>
</dbReference>
<dbReference type="SMART" id="SM00649">
    <property type="entry name" value="RL11"/>
    <property type="match status" value="1"/>
</dbReference>
<dbReference type="SUPFAM" id="SSF54747">
    <property type="entry name" value="Ribosomal L11/L12e N-terminal domain"/>
    <property type="match status" value="1"/>
</dbReference>
<dbReference type="SUPFAM" id="SSF46906">
    <property type="entry name" value="Ribosomal protein L11, C-terminal domain"/>
    <property type="match status" value="1"/>
</dbReference>
<proteinExistence type="inferred from homology"/>
<name>RL11_CAUSK</name>
<sequence>MAKKILGYIKLQVKAGSATPSPPIGPALGQRGVNIMGFCKEFNARTENVEKGTPLPTVITVYQDKSFTFVTKTPPATHYLKQITGLKSGAKLTGRETVGEVTRTQLREIAEKKMKDLNANDLEAAAKIIEGSAKAMGLKIVEA</sequence>
<evidence type="ECO:0000255" key="1">
    <source>
        <dbReference type="HAMAP-Rule" id="MF_00736"/>
    </source>
</evidence>
<evidence type="ECO:0000305" key="2"/>